<sequence length="1076" mass="118703">MHIATFPALAITALALVLWATVATHSSNTNSCHMSYMKPDMIAMTGFNTTQTPLAHKYSLHLYRELDVDLSREVGGRPVLFVPGNGGSMRQIRSIAGEAAVQYWHDPRRAGADADTWANGSTARPKSALQKLNTFAFGDTESDTEGVRGLGDAVTARDMSGDDRRDAVERPLSNGKLPSQWPDDLPLDFFTVNFQEDLTAFDGTTVIDQAEYLNQAIAYILSLYSSHPNPPTSVIVIGHSMGGIVARTMVTLDSYIHGSINTILTLATPHVLPPVSFDKGIVGLYHNVNEFWKTETVPGGKLEDTLLVSVTGGIRDQMIPAEYSSVDTFLPPTNGFAVATTSIPDVWMSIDHQAMVWCHQLRRVVAETLLVVAGETTEKVSTRLDTFQEYFLSGMERVEKKAQNASESSKLTLDTLVSINTPLTTTSNIIINDHSPNQLVKTKSYFKFPVLKASEINEMSRSFAMPVDKGKSLLVKTNMPLEDLHILVCRTNTGDVDTNGFSFLRYGSKSKGVRVGTDTLVCANVAGEAVAMPSSIKYATGAKIPEEEETGEDNDIPVDSAISSTSLSEYIQLDASSLSGFQYVVVIDNTMSETISSDSYLLAEMALPSDMAVVAAPTWWEVLKVGRFTIELPEKRALLTKISLPHFWSSLVAFSIRLSTSDSFSMEYQCEAKKSMGSEHDVLFAPLLMQYSAQLHEAKFSTNLCGGYEQGTRVAVHGGAPYMPLAEGRDVSGTELYLWTDSSSRSSESLSLTLEIDLWGSLGRFLGFYRVMFAIFPMFVFLCLLMIQLRVWTTTELFVSLSDALDVFVDFQLPWILAGSCAIPFVPHVLVSLLYPQMSQPGQFFLGLNGTHLWFLGPVSLVIATGIVVVLHWLLQILTLWVCQCYYMLGLAPIAPESPFSVRRIVTISFLLLLVFKIVPHQFAFMVAVLVMAMGAGKARVGRLMQSEDKDNKSEPCVVIDRNLINYTHSLLLLLVLLLPINAPTLVVWLHNMANKWHTPLESHHEVSAILPILLLVLTASRGIMIRLPQSKRAIYATFAFLAYFALFVLFHGVVHSYRLHLLTNGLCLCLLYLSL</sequence>
<reference key="1">
    <citation type="journal article" date="2004" name="Nature">
        <title>Genome evolution in yeasts.</title>
        <authorList>
            <person name="Dujon B."/>
            <person name="Sherman D."/>
            <person name="Fischer G."/>
            <person name="Durrens P."/>
            <person name="Casaregola S."/>
            <person name="Lafontaine I."/>
            <person name="de Montigny J."/>
            <person name="Marck C."/>
            <person name="Neuveglise C."/>
            <person name="Talla E."/>
            <person name="Goffard N."/>
            <person name="Frangeul L."/>
            <person name="Aigle M."/>
            <person name="Anthouard V."/>
            <person name="Babour A."/>
            <person name="Barbe V."/>
            <person name="Barnay S."/>
            <person name="Blanchin S."/>
            <person name="Beckerich J.-M."/>
            <person name="Beyne E."/>
            <person name="Bleykasten C."/>
            <person name="Boisrame A."/>
            <person name="Boyer J."/>
            <person name="Cattolico L."/>
            <person name="Confanioleri F."/>
            <person name="de Daruvar A."/>
            <person name="Despons L."/>
            <person name="Fabre E."/>
            <person name="Fairhead C."/>
            <person name="Ferry-Dumazet H."/>
            <person name="Groppi A."/>
            <person name="Hantraye F."/>
            <person name="Hennequin C."/>
            <person name="Jauniaux N."/>
            <person name="Joyet P."/>
            <person name="Kachouri R."/>
            <person name="Kerrest A."/>
            <person name="Koszul R."/>
            <person name="Lemaire M."/>
            <person name="Lesur I."/>
            <person name="Ma L."/>
            <person name="Muller H."/>
            <person name="Nicaud J.-M."/>
            <person name="Nikolski M."/>
            <person name="Oztas S."/>
            <person name="Ozier-Kalogeropoulos O."/>
            <person name="Pellenz S."/>
            <person name="Potier S."/>
            <person name="Richard G.-F."/>
            <person name="Straub M.-L."/>
            <person name="Suleau A."/>
            <person name="Swennen D."/>
            <person name="Tekaia F."/>
            <person name="Wesolowski-Louvel M."/>
            <person name="Westhof E."/>
            <person name="Wirth B."/>
            <person name="Zeniou-Meyer M."/>
            <person name="Zivanovic Y."/>
            <person name="Bolotin-Fukuhara M."/>
            <person name="Thierry A."/>
            <person name="Bouchier C."/>
            <person name="Caudron B."/>
            <person name="Scarpelli C."/>
            <person name="Gaillardin C."/>
            <person name="Weissenbach J."/>
            <person name="Wincker P."/>
            <person name="Souciet J.-L."/>
        </authorList>
    </citation>
    <scope>NUCLEOTIDE SEQUENCE [LARGE SCALE GENOMIC DNA]</scope>
    <source>
        <strain>CLIB 122 / E 150</strain>
    </source>
</reference>
<gene>
    <name type="primary">BST1A</name>
    <name type="ordered locus">YALI0F03927g</name>
</gene>
<dbReference type="EC" id="3.1.-.-"/>
<dbReference type="EMBL" id="CR382132">
    <property type="protein sequence ID" value="CAG77777.1"/>
    <property type="molecule type" value="Genomic_DNA"/>
</dbReference>
<dbReference type="RefSeq" id="XP_504970.1">
    <property type="nucleotide sequence ID" value="XM_504970.1"/>
</dbReference>
<dbReference type="SMR" id="Q6C2Z2"/>
<dbReference type="STRING" id="284591.Q6C2Z2"/>
<dbReference type="ESTHER" id="yarli-q6c2z2">
    <property type="family name" value="PGAP1"/>
</dbReference>
<dbReference type="GlyCosmos" id="Q6C2Z2">
    <property type="glycosylation" value="6 sites, No reported glycans"/>
</dbReference>
<dbReference type="EnsemblFungi" id="CAG77777">
    <property type="protein sequence ID" value="CAG77777"/>
    <property type="gene ID" value="YALI0_F03927g"/>
</dbReference>
<dbReference type="KEGG" id="yli:2907718"/>
<dbReference type="VEuPathDB" id="FungiDB:YALI0_F03927g"/>
<dbReference type="HOGENOM" id="CLU_006103_0_0_1"/>
<dbReference type="InParanoid" id="Q6C2Z2"/>
<dbReference type="OMA" id="ASANTHK"/>
<dbReference type="OrthoDB" id="126152at4891"/>
<dbReference type="Proteomes" id="UP000001300">
    <property type="component" value="Chromosome F"/>
</dbReference>
<dbReference type="GO" id="GO:0005783">
    <property type="term" value="C:endoplasmic reticulum"/>
    <property type="evidence" value="ECO:0000318"/>
    <property type="project" value="GO_Central"/>
</dbReference>
<dbReference type="GO" id="GO:0005789">
    <property type="term" value="C:endoplasmic reticulum membrane"/>
    <property type="evidence" value="ECO:0007669"/>
    <property type="project" value="UniProtKB-SubCell"/>
</dbReference>
<dbReference type="GO" id="GO:0050185">
    <property type="term" value="F:phosphatidylinositol deacylase activity"/>
    <property type="evidence" value="ECO:0000318"/>
    <property type="project" value="GO_Central"/>
</dbReference>
<dbReference type="GO" id="GO:0006506">
    <property type="term" value="P:GPI anchor biosynthetic process"/>
    <property type="evidence" value="ECO:0000318"/>
    <property type="project" value="GO_Central"/>
</dbReference>
<dbReference type="GO" id="GO:0015031">
    <property type="term" value="P:protein transport"/>
    <property type="evidence" value="ECO:0007669"/>
    <property type="project" value="UniProtKB-KW"/>
</dbReference>
<dbReference type="Gene3D" id="3.40.50.1820">
    <property type="entry name" value="alpha/beta hydrolase"/>
    <property type="match status" value="1"/>
</dbReference>
<dbReference type="InterPro" id="IPR029058">
    <property type="entry name" value="AB_hydrolase_fold"/>
</dbReference>
<dbReference type="InterPro" id="IPR012908">
    <property type="entry name" value="PGAP1-ab_dom-like"/>
</dbReference>
<dbReference type="InterPro" id="IPR039529">
    <property type="entry name" value="PGAP1/BST1"/>
</dbReference>
<dbReference type="InterPro" id="IPR056824">
    <property type="entry name" value="PGAP1_TMD"/>
</dbReference>
<dbReference type="PANTHER" id="PTHR15495:SF7">
    <property type="entry name" value="GPI INOSITOL-DEACYLASE"/>
    <property type="match status" value="1"/>
</dbReference>
<dbReference type="PANTHER" id="PTHR15495">
    <property type="entry name" value="NEGATIVE REGULATOR OF VESICLE FORMATION-RELATED"/>
    <property type="match status" value="1"/>
</dbReference>
<dbReference type="Pfam" id="PF07819">
    <property type="entry name" value="PGAP1"/>
    <property type="match status" value="1"/>
</dbReference>
<dbReference type="Pfam" id="PF25141">
    <property type="entry name" value="PGAP1_2nd"/>
    <property type="match status" value="1"/>
</dbReference>
<dbReference type="Pfam" id="PF25140">
    <property type="entry name" value="PGAP1_TMD"/>
    <property type="match status" value="1"/>
</dbReference>
<dbReference type="SUPFAM" id="SSF53474">
    <property type="entry name" value="alpha/beta-Hydrolases"/>
    <property type="match status" value="1"/>
</dbReference>
<dbReference type="PROSITE" id="PS00120">
    <property type="entry name" value="LIPASE_SER"/>
    <property type="match status" value="1"/>
</dbReference>
<protein>
    <recommendedName>
        <fullName>GPI inositol-deacylase A</fullName>
        <ecNumber>3.1.-.-</ecNumber>
    </recommendedName>
</protein>
<organism>
    <name type="scientific">Yarrowia lipolytica (strain CLIB 122 / E 150)</name>
    <name type="common">Yeast</name>
    <name type="synonym">Candida lipolytica</name>
    <dbReference type="NCBI Taxonomy" id="284591"/>
    <lineage>
        <taxon>Eukaryota</taxon>
        <taxon>Fungi</taxon>
        <taxon>Dikarya</taxon>
        <taxon>Ascomycota</taxon>
        <taxon>Saccharomycotina</taxon>
        <taxon>Dipodascomycetes</taxon>
        <taxon>Dipodascales</taxon>
        <taxon>Dipodascales incertae sedis</taxon>
        <taxon>Yarrowia</taxon>
    </lineage>
</organism>
<proteinExistence type="inferred from homology"/>
<name>BST1A_YARLI</name>
<comment type="function">
    <text evidence="1">Involved in inositol deacylation of GPI-anchored proteins which plays important roles in the quality control and ER-associated degradation of GPI-anchored proteins.</text>
</comment>
<comment type="subcellular location">
    <subcellularLocation>
        <location evidence="1">Endoplasmic reticulum membrane</location>
        <topology evidence="1">Multi-pass membrane protein</topology>
    </subcellularLocation>
</comment>
<comment type="similarity">
    <text evidence="3">Belongs to the GPI inositol-deacylase family.</text>
</comment>
<keyword id="KW-0256">Endoplasmic reticulum</keyword>
<keyword id="KW-0325">Glycoprotein</keyword>
<keyword id="KW-0378">Hydrolase</keyword>
<keyword id="KW-0472">Membrane</keyword>
<keyword id="KW-0653">Protein transport</keyword>
<keyword id="KW-1185">Reference proteome</keyword>
<keyword id="KW-0812">Transmembrane</keyword>
<keyword id="KW-1133">Transmembrane helix</keyword>
<keyword id="KW-0813">Transport</keyword>
<feature type="chain" id="PRO_0000277644" description="GPI inositol-deacylase A">
    <location>
        <begin position="1"/>
        <end position="1076"/>
    </location>
</feature>
<feature type="transmembrane region" description="Helical" evidence="2">
    <location>
        <begin position="3"/>
        <end position="23"/>
    </location>
</feature>
<feature type="transmembrane region" description="Helical" evidence="2">
    <location>
        <begin position="765"/>
        <end position="785"/>
    </location>
</feature>
<feature type="transmembrane region" description="Helical" evidence="2">
    <location>
        <begin position="815"/>
        <end position="835"/>
    </location>
</feature>
<feature type="transmembrane region" description="Helical" evidence="2">
    <location>
        <begin position="855"/>
        <end position="875"/>
    </location>
</feature>
<feature type="transmembrane region" description="Helical" evidence="2">
    <location>
        <begin position="877"/>
        <end position="897"/>
    </location>
</feature>
<feature type="transmembrane region" description="Helical" evidence="2">
    <location>
        <begin position="910"/>
        <end position="930"/>
    </location>
</feature>
<feature type="transmembrane region" description="Helical" evidence="2">
    <location>
        <begin position="970"/>
        <end position="990"/>
    </location>
</feature>
<feature type="transmembrane region" description="Helical" evidence="2">
    <location>
        <begin position="1006"/>
        <end position="1026"/>
    </location>
</feature>
<feature type="transmembrane region" description="Helical" evidence="2">
    <location>
        <begin position="1035"/>
        <end position="1055"/>
    </location>
</feature>
<feature type="active site" evidence="1">
    <location>
        <position position="240"/>
    </location>
</feature>
<feature type="glycosylation site" description="N-linked (GlcNAc...) asparagine" evidence="2">
    <location>
        <position position="48"/>
    </location>
</feature>
<feature type="glycosylation site" description="N-linked (GlcNAc...) asparagine" evidence="2">
    <location>
        <position position="119"/>
    </location>
</feature>
<feature type="glycosylation site" description="N-linked (GlcNAc...) asparagine" evidence="2">
    <location>
        <position position="404"/>
    </location>
</feature>
<feature type="glycosylation site" description="N-linked (GlcNAc...) asparagine" evidence="2">
    <location>
        <position position="849"/>
    </location>
</feature>
<feature type="glycosylation site" description="N-linked (GlcNAc...) asparagine" evidence="2">
    <location>
        <position position="952"/>
    </location>
</feature>
<feature type="glycosylation site" description="N-linked (GlcNAc...) asparagine" evidence="2">
    <location>
        <position position="966"/>
    </location>
</feature>
<accession>Q6C2Z2</accession>
<evidence type="ECO:0000250" key="1"/>
<evidence type="ECO:0000255" key="2"/>
<evidence type="ECO:0000305" key="3"/>